<sequence length="153" mass="17047">MTEVIAYLIEHFQDFDTCPPPEDLGMLLEEAGFDTMEIGNTLMMMEVLLNSSEFSAEPAGSGALRVYSKEETDNLPQEVMGLMQYLIEEKAVSCEQREIIIHALMHIPGDEITVDTAKVLTLLLLWANKSELPVLVGDELMSALLLDNKPTMN</sequence>
<evidence type="ECO:0000255" key="1">
    <source>
        <dbReference type="HAMAP-Rule" id="MF_00598"/>
    </source>
</evidence>
<gene>
    <name evidence="1" type="primary">smg</name>
    <name type="ordered locus">NGO_1864</name>
</gene>
<accession>Q5F5Q3</accession>
<comment type="similarity">
    <text evidence="1">Belongs to the Smg family.</text>
</comment>
<dbReference type="EMBL" id="AE004969">
    <property type="protein sequence ID" value="AAW90484.1"/>
    <property type="molecule type" value="Genomic_DNA"/>
</dbReference>
<dbReference type="RefSeq" id="WP_003690120.1">
    <property type="nucleotide sequence ID" value="NC_002946.2"/>
</dbReference>
<dbReference type="RefSeq" id="YP_208896.1">
    <property type="nucleotide sequence ID" value="NC_002946.2"/>
</dbReference>
<dbReference type="SMR" id="Q5F5Q3"/>
<dbReference type="STRING" id="242231.NGO_1864"/>
<dbReference type="KEGG" id="ngo:NGO_1864"/>
<dbReference type="PATRIC" id="fig|242231.10.peg.2242"/>
<dbReference type="HOGENOM" id="CLU_133242_0_0_4"/>
<dbReference type="Proteomes" id="UP000000535">
    <property type="component" value="Chromosome"/>
</dbReference>
<dbReference type="HAMAP" id="MF_00598">
    <property type="entry name" value="Smg"/>
    <property type="match status" value="1"/>
</dbReference>
<dbReference type="InterPro" id="IPR007456">
    <property type="entry name" value="Smg"/>
</dbReference>
<dbReference type="PANTHER" id="PTHR38692">
    <property type="entry name" value="PROTEIN SMG"/>
    <property type="match status" value="1"/>
</dbReference>
<dbReference type="PANTHER" id="PTHR38692:SF1">
    <property type="entry name" value="PROTEIN SMG"/>
    <property type="match status" value="1"/>
</dbReference>
<dbReference type="Pfam" id="PF04361">
    <property type="entry name" value="DUF494"/>
    <property type="match status" value="1"/>
</dbReference>
<keyword id="KW-1185">Reference proteome</keyword>
<organism>
    <name type="scientific">Neisseria gonorrhoeae (strain ATCC 700825 / FA 1090)</name>
    <dbReference type="NCBI Taxonomy" id="242231"/>
    <lineage>
        <taxon>Bacteria</taxon>
        <taxon>Pseudomonadati</taxon>
        <taxon>Pseudomonadota</taxon>
        <taxon>Betaproteobacteria</taxon>
        <taxon>Neisseriales</taxon>
        <taxon>Neisseriaceae</taxon>
        <taxon>Neisseria</taxon>
    </lineage>
</organism>
<protein>
    <recommendedName>
        <fullName evidence="1">Protein Smg homolog</fullName>
    </recommendedName>
</protein>
<name>SMG_NEIG1</name>
<reference key="1">
    <citation type="submission" date="2003-03" db="EMBL/GenBank/DDBJ databases">
        <title>The complete genome sequence of Neisseria gonorrhoeae.</title>
        <authorList>
            <person name="Lewis L.A."/>
            <person name="Gillaspy A.F."/>
            <person name="McLaughlin R.E."/>
            <person name="Gipson M."/>
            <person name="Ducey T.F."/>
            <person name="Ownbey T."/>
            <person name="Hartman K."/>
            <person name="Nydick C."/>
            <person name="Carson M.B."/>
            <person name="Vaughn J."/>
            <person name="Thomson C."/>
            <person name="Song L."/>
            <person name="Lin S."/>
            <person name="Yuan X."/>
            <person name="Najar F."/>
            <person name="Zhan M."/>
            <person name="Ren Q."/>
            <person name="Zhu H."/>
            <person name="Qi S."/>
            <person name="Kenton S.M."/>
            <person name="Lai H."/>
            <person name="White J.D."/>
            <person name="Clifton S."/>
            <person name="Roe B.A."/>
            <person name="Dyer D.W."/>
        </authorList>
    </citation>
    <scope>NUCLEOTIDE SEQUENCE [LARGE SCALE GENOMIC DNA]</scope>
    <source>
        <strain>ATCC 700825 / FA 1090</strain>
    </source>
</reference>
<proteinExistence type="inferred from homology"/>
<feature type="chain" id="PRO_0000209173" description="Protein Smg homolog">
    <location>
        <begin position="1"/>
        <end position="153"/>
    </location>
</feature>